<proteinExistence type="inferred from homology"/>
<reference key="1">
    <citation type="journal article" date="1996" name="Proc. Natl. Acad. Sci. U.S.A.">
        <title>Homing events in the gyrA gene of some mycobacteria.</title>
        <authorList>
            <person name="Fsihi H."/>
            <person name="Vincent V."/>
            <person name="Cole S.T."/>
        </authorList>
    </citation>
    <scope>NUCLEOTIDE SEQUENCE [GENOMIC DNA]</scope>
    <source>
        <strain>GOR0 / 930835</strain>
    </source>
</reference>
<protein>
    <recommendedName>
        <fullName>DNA gyrase subunit A</fullName>
        <ecNumber evidence="4">5.6.2.2</ecNumber>
    </recommendedName>
    <component>
        <recommendedName>
            <fullName>Mgo GyrA intein</fullName>
        </recommendedName>
    </component>
</protein>
<gene>
    <name type="primary">gyrA</name>
</gene>
<organism>
    <name type="scientific">Mycobacterium gordonae</name>
    <dbReference type="NCBI Taxonomy" id="1778"/>
    <lineage>
        <taxon>Bacteria</taxon>
        <taxon>Bacillati</taxon>
        <taxon>Actinomycetota</taxon>
        <taxon>Actinomycetes</taxon>
        <taxon>Mycobacteriales</taxon>
        <taxon>Mycobacteriaceae</taxon>
        <taxon>Mycobacterium</taxon>
    </lineage>
</organism>
<feature type="chain" id="PRO_0000034801" description="DNA gyrase subunit A, 1st part" evidence="2">
    <location>
        <begin position="1" status="less than"/>
        <end position="66"/>
    </location>
</feature>
<feature type="chain" id="PRO_0000034802" description="Mgo GyrA intein" evidence="1">
    <location>
        <begin position="67"/>
        <end position="486"/>
    </location>
</feature>
<feature type="chain" id="PRO_0000034803" description="DNA gyrase subunit A, 2nd part" evidence="1">
    <location>
        <begin position="487"/>
        <end position="550" status="greater than"/>
    </location>
</feature>
<feature type="domain" description="Topo IIA-type catalytic" evidence="4">
    <location>
        <begin position="1"/>
        <end position="550"/>
    </location>
</feature>
<feature type="domain" description="DOD-type homing endonuclease" evidence="3">
    <location>
        <begin position="192"/>
        <end position="332"/>
    </location>
</feature>
<feature type="active site" description="O-(5'-phospho-DNA)-tyrosine intermediate" evidence="4">
    <location>
        <position position="66"/>
    </location>
</feature>
<feature type="non-terminal residue">
    <location>
        <position position="1"/>
    </location>
</feature>
<feature type="non-terminal residue">
    <location>
        <position position="550"/>
    </location>
</feature>
<accession>Q49467</accession>
<keyword id="KW-0067">ATP-binding</keyword>
<keyword id="KW-0068">Autocatalytic cleavage</keyword>
<keyword id="KW-0963">Cytoplasm</keyword>
<keyword id="KW-0238">DNA-binding</keyword>
<keyword id="KW-0413">Isomerase</keyword>
<keyword id="KW-0547">Nucleotide-binding</keyword>
<keyword id="KW-0651">Protein splicing</keyword>
<keyword id="KW-0799">Topoisomerase</keyword>
<comment type="function">
    <text evidence="2">A type II topoisomerase that negatively supercoils closed circular double-stranded (ds) DNA in an ATP-dependent manner to modulate DNA topology and maintain chromosomes in an underwound state. Negative supercoiling favors strand separation, and DNA replication, transcription, recombination and repair, all of which involve strand separation. Also able to catalyze the interconversion of other topological isomers of dsDNA rings, including catenanes and knotted rings. Type II topoisomerases break and join 2 DNA strands simultaneously in an ATP-dependent manner.</text>
</comment>
<comment type="catalytic activity">
    <reaction evidence="4">
        <text>ATP-dependent breakage, passage and rejoining of double-stranded DNA.</text>
        <dbReference type="EC" id="5.6.2.2"/>
    </reaction>
</comment>
<comment type="subunit">
    <text evidence="2">Heterotetramer, composed of two GyrA and two GyrB chains. In the heterotetramer, GyrA contains the active site tyrosine that forms a transient covalent intermediate with DNA, while GyrB binds cofactors and catalyzes ATP hydrolysis.</text>
</comment>
<comment type="subcellular location">
    <subcellularLocation>
        <location evidence="2">Cytoplasm</location>
    </subcellularLocation>
</comment>
<comment type="PTM">
    <text evidence="1">This protein undergoes a protein self splicing that involves a post-translational excision of the intervening region (intein) followed by peptide ligation.</text>
</comment>
<comment type="miscellaneous">
    <text evidence="2">Few gyrases are as efficient as E.coli at forming negative supercoils. Not all organisms have 2 type II topoisomerases; in organisms with a single type II topoisomerase this enzyme also has to decatenate newly replicated chromosomes.</text>
</comment>
<comment type="similarity">
    <text>Belongs to the type II topoisomerase GyrA/ParC subunit family.</text>
</comment>
<sequence length="550" mass="60537">FRPDRSHAKSARSVAETMGNYHPHGDASIYDTLVRMAQPWSLRYPLVDGQGNFGSPGNDPPAAMRYCLTGDALVRLPFGQSMRIGDVAPGARTNSDNAGELKVLDRHGDPVFADRLFHSGDHQTFRVQTAEGYEVTGTSNHPVLCLVNLAGVPTLLWMLIEEIRPDDYVVLQRAPPVESGPANWRDAMEALLLGAFISEGFMSESRAGFNNVDRDYFNAVVAAYDAVVGGKRYVAQRTIASGSVLNELDIHDVSALKGTRLGVLCGQRSADKSVPEWLWQSPAAVKRVFLQALFEGDGSCSALPRNTIQVSYSTRSRQLAIDVQQMLLEFGVISRRYRHAVGEYKVVITNRAQAELFATQIGFGGAKQSKLTRILGSLPPCAGMDTNHVPGLAAFIRSHCDSEWVDKEWLRKHNIDRLSRWRRDGAEILSRIANPDVRAIATDLTDGRFYYAQVTSVTEAGVQPVYSLRVDSEDHAFLTNGFVSHNTEARLTPLAMEMLREIDEETVDFIPNYDGRVQEPTVLPSRFPNLLANGSGGIAVGMATNIPPHN</sequence>
<name>GYRA_MYCGO</name>
<dbReference type="EC" id="5.6.2.2" evidence="4"/>
<dbReference type="EMBL" id="Z68208">
    <property type="protein sequence ID" value="CAA92432.1"/>
    <property type="molecule type" value="Genomic_DNA"/>
</dbReference>
<dbReference type="SMR" id="Q49467"/>
<dbReference type="GO" id="GO:0005737">
    <property type="term" value="C:cytoplasm"/>
    <property type="evidence" value="ECO:0007669"/>
    <property type="project" value="UniProtKB-SubCell"/>
</dbReference>
<dbReference type="GO" id="GO:0009330">
    <property type="term" value="C:DNA topoisomerase type II (double strand cut, ATP-hydrolyzing) complex"/>
    <property type="evidence" value="ECO:0007669"/>
    <property type="project" value="TreeGrafter"/>
</dbReference>
<dbReference type="GO" id="GO:0005524">
    <property type="term" value="F:ATP binding"/>
    <property type="evidence" value="ECO:0007669"/>
    <property type="project" value="UniProtKB-KW"/>
</dbReference>
<dbReference type="GO" id="GO:0003677">
    <property type="term" value="F:DNA binding"/>
    <property type="evidence" value="ECO:0007669"/>
    <property type="project" value="UniProtKB-KW"/>
</dbReference>
<dbReference type="GO" id="GO:0034335">
    <property type="term" value="F:DNA negative supercoiling activity"/>
    <property type="evidence" value="ECO:0007669"/>
    <property type="project" value="UniProtKB-ARBA"/>
</dbReference>
<dbReference type="GO" id="GO:0004519">
    <property type="term" value="F:endonuclease activity"/>
    <property type="evidence" value="ECO:0007669"/>
    <property type="project" value="InterPro"/>
</dbReference>
<dbReference type="GO" id="GO:0006265">
    <property type="term" value="P:DNA topological change"/>
    <property type="evidence" value="ECO:0007669"/>
    <property type="project" value="InterPro"/>
</dbReference>
<dbReference type="GO" id="GO:0016539">
    <property type="term" value="P:intein-mediated protein splicing"/>
    <property type="evidence" value="ECO:0007669"/>
    <property type="project" value="InterPro"/>
</dbReference>
<dbReference type="CDD" id="cd00081">
    <property type="entry name" value="Hint"/>
    <property type="match status" value="1"/>
</dbReference>
<dbReference type="Gene3D" id="2.170.16.10">
    <property type="entry name" value="Hedgehog/Intein (Hint) domain"/>
    <property type="match status" value="2"/>
</dbReference>
<dbReference type="Gene3D" id="3.10.28.10">
    <property type="entry name" value="Homing endonucleases"/>
    <property type="match status" value="1"/>
</dbReference>
<dbReference type="Gene3D" id="3.90.199.10">
    <property type="entry name" value="Topoisomerase II, domain 5"/>
    <property type="match status" value="2"/>
</dbReference>
<dbReference type="InterPro" id="IPR003586">
    <property type="entry name" value="Hint_dom_C"/>
</dbReference>
<dbReference type="InterPro" id="IPR003587">
    <property type="entry name" value="Hint_dom_N"/>
</dbReference>
<dbReference type="InterPro" id="IPR036844">
    <property type="entry name" value="Hint_dom_sf"/>
</dbReference>
<dbReference type="InterPro" id="IPR027434">
    <property type="entry name" value="Homing_endonucl"/>
</dbReference>
<dbReference type="InterPro" id="IPR006142">
    <property type="entry name" value="INTEIN"/>
</dbReference>
<dbReference type="InterPro" id="IPR030934">
    <property type="entry name" value="Intein_C"/>
</dbReference>
<dbReference type="InterPro" id="IPR004042">
    <property type="entry name" value="Intein_endonuc_central"/>
</dbReference>
<dbReference type="InterPro" id="IPR006141">
    <property type="entry name" value="Intein_N"/>
</dbReference>
<dbReference type="InterPro" id="IPR004860">
    <property type="entry name" value="LAGLIDADG_dom"/>
</dbReference>
<dbReference type="InterPro" id="IPR013760">
    <property type="entry name" value="Topo_IIA-like_dom_sf"/>
</dbReference>
<dbReference type="InterPro" id="IPR013758">
    <property type="entry name" value="Topo_IIA_A/C_ab"/>
</dbReference>
<dbReference type="InterPro" id="IPR002205">
    <property type="entry name" value="Topo_IIA_dom_A"/>
</dbReference>
<dbReference type="InterPro" id="IPR050220">
    <property type="entry name" value="Type_II_DNA_Topoisomerases"/>
</dbReference>
<dbReference type="NCBIfam" id="TIGR01443">
    <property type="entry name" value="intein_Cterm"/>
    <property type="match status" value="1"/>
</dbReference>
<dbReference type="NCBIfam" id="TIGR01445">
    <property type="entry name" value="intein_Nterm"/>
    <property type="match status" value="1"/>
</dbReference>
<dbReference type="PANTHER" id="PTHR43493:SF5">
    <property type="entry name" value="DNA GYRASE SUBUNIT A, CHLOROPLASTIC_MITOCHONDRIAL"/>
    <property type="match status" value="1"/>
</dbReference>
<dbReference type="PANTHER" id="PTHR43493">
    <property type="entry name" value="DNA GYRASE/TOPOISOMERASE SUBUNIT A"/>
    <property type="match status" value="1"/>
</dbReference>
<dbReference type="Pfam" id="PF00521">
    <property type="entry name" value="DNA_topoisoIV"/>
    <property type="match status" value="2"/>
</dbReference>
<dbReference type="Pfam" id="PF14528">
    <property type="entry name" value="LAGLIDADG_3"/>
    <property type="match status" value="1"/>
</dbReference>
<dbReference type="PRINTS" id="PR00379">
    <property type="entry name" value="INTEIN"/>
</dbReference>
<dbReference type="SMART" id="SM00305">
    <property type="entry name" value="HintC"/>
    <property type="match status" value="1"/>
</dbReference>
<dbReference type="SMART" id="SM00306">
    <property type="entry name" value="HintN"/>
    <property type="match status" value="1"/>
</dbReference>
<dbReference type="SMART" id="SM00434">
    <property type="entry name" value="TOP4c"/>
    <property type="match status" value="1"/>
</dbReference>
<dbReference type="SUPFAM" id="SSF51294">
    <property type="entry name" value="Hedgehog/intein (Hint) domain"/>
    <property type="match status" value="1"/>
</dbReference>
<dbReference type="SUPFAM" id="SSF55608">
    <property type="entry name" value="Homing endonucleases"/>
    <property type="match status" value="1"/>
</dbReference>
<dbReference type="SUPFAM" id="SSF56719">
    <property type="entry name" value="Type II DNA topoisomerase"/>
    <property type="match status" value="2"/>
</dbReference>
<dbReference type="PROSITE" id="PS50818">
    <property type="entry name" value="INTEIN_C_TER"/>
    <property type="match status" value="1"/>
</dbReference>
<dbReference type="PROSITE" id="PS50819">
    <property type="entry name" value="INTEIN_ENDONUCLEASE"/>
    <property type="match status" value="1"/>
</dbReference>
<dbReference type="PROSITE" id="PS50817">
    <property type="entry name" value="INTEIN_N_TER"/>
    <property type="match status" value="1"/>
</dbReference>
<dbReference type="PROSITE" id="PS52040">
    <property type="entry name" value="TOPO_IIA"/>
    <property type="match status" value="1"/>
</dbReference>
<evidence type="ECO:0000250" key="1"/>
<evidence type="ECO:0000250" key="2">
    <source>
        <dbReference type="UniProtKB" id="P0AES4"/>
    </source>
</evidence>
<evidence type="ECO:0000255" key="3">
    <source>
        <dbReference type="PROSITE-ProRule" id="PRU00273"/>
    </source>
</evidence>
<evidence type="ECO:0000255" key="4">
    <source>
        <dbReference type="PROSITE-ProRule" id="PRU01384"/>
    </source>
</evidence>